<reference key="1">
    <citation type="journal article" date="2002" name="Proc. Natl. Acad. Sci. U.S.A.">
        <title>Complete genome sequence and comparative genomic analysis of an emerging human pathogen, serotype V Streptococcus agalactiae.</title>
        <authorList>
            <person name="Tettelin H."/>
            <person name="Masignani V."/>
            <person name="Cieslewicz M.J."/>
            <person name="Eisen J.A."/>
            <person name="Peterson S.N."/>
            <person name="Wessels M.R."/>
            <person name="Paulsen I.T."/>
            <person name="Nelson K.E."/>
            <person name="Margarit I."/>
            <person name="Read T.D."/>
            <person name="Madoff L.C."/>
            <person name="Wolf A.M."/>
            <person name="Beanan M.J."/>
            <person name="Brinkac L.M."/>
            <person name="Daugherty S.C."/>
            <person name="DeBoy R.T."/>
            <person name="Durkin A.S."/>
            <person name="Kolonay J.F."/>
            <person name="Madupu R."/>
            <person name="Lewis M.R."/>
            <person name="Radune D."/>
            <person name="Fedorova N.B."/>
            <person name="Scanlan D."/>
            <person name="Khouri H.M."/>
            <person name="Mulligan S."/>
            <person name="Carty H.A."/>
            <person name="Cline R.T."/>
            <person name="Van Aken S.E."/>
            <person name="Gill J."/>
            <person name="Scarselli M."/>
            <person name="Mora M."/>
            <person name="Iacobini E.T."/>
            <person name="Brettoni C."/>
            <person name="Galli G."/>
            <person name="Mariani M."/>
            <person name="Vegni F."/>
            <person name="Maione D."/>
            <person name="Rinaudo D."/>
            <person name="Rappuoli R."/>
            <person name="Telford J.L."/>
            <person name="Kasper D.L."/>
            <person name="Grandi G."/>
            <person name="Fraser C.M."/>
        </authorList>
    </citation>
    <scope>NUCLEOTIDE SEQUENCE [LARGE SCALE GENOMIC DNA]</scope>
    <source>
        <strain>ATCC BAA-611 / 2603 V/R</strain>
    </source>
</reference>
<accession>Q8DZ20</accession>
<gene>
    <name evidence="1" type="primary">rplJ</name>
    <name type="ordered locus">SAG1302</name>
</gene>
<organism>
    <name type="scientific">Streptococcus agalactiae serotype V (strain ATCC BAA-611 / 2603 V/R)</name>
    <dbReference type="NCBI Taxonomy" id="208435"/>
    <lineage>
        <taxon>Bacteria</taxon>
        <taxon>Bacillati</taxon>
        <taxon>Bacillota</taxon>
        <taxon>Bacilli</taxon>
        <taxon>Lactobacillales</taxon>
        <taxon>Streptococcaceae</taxon>
        <taxon>Streptococcus</taxon>
    </lineage>
</organism>
<protein>
    <recommendedName>
        <fullName evidence="1">Large ribosomal subunit protein uL10</fullName>
    </recommendedName>
    <alternativeName>
        <fullName evidence="2">50S ribosomal protein L10</fullName>
    </alternativeName>
</protein>
<name>RL10_STRA5</name>
<dbReference type="EMBL" id="AE009948">
    <property type="protein sequence ID" value="AAN00173.1"/>
    <property type="molecule type" value="Genomic_DNA"/>
</dbReference>
<dbReference type="RefSeq" id="NP_688300.1">
    <property type="nucleotide sequence ID" value="NC_004116.1"/>
</dbReference>
<dbReference type="RefSeq" id="WP_001287288.1">
    <property type="nucleotide sequence ID" value="NC_004116.1"/>
</dbReference>
<dbReference type="SMR" id="Q8DZ20"/>
<dbReference type="STRING" id="208435.SAG1302"/>
<dbReference type="KEGG" id="sag:SAG1302"/>
<dbReference type="PATRIC" id="fig|208435.3.peg.1312"/>
<dbReference type="HOGENOM" id="CLU_092227_2_0_9"/>
<dbReference type="OrthoDB" id="9808307at2"/>
<dbReference type="Proteomes" id="UP000000821">
    <property type="component" value="Chromosome"/>
</dbReference>
<dbReference type="GO" id="GO:0015934">
    <property type="term" value="C:large ribosomal subunit"/>
    <property type="evidence" value="ECO:0007669"/>
    <property type="project" value="InterPro"/>
</dbReference>
<dbReference type="GO" id="GO:0070180">
    <property type="term" value="F:large ribosomal subunit rRNA binding"/>
    <property type="evidence" value="ECO:0007669"/>
    <property type="project" value="UniProtKB-UniRule"/>
</dbReference>
<dbReference type="GO" id="GO:0003735">
    <property type="term" value="F:structural constituent of ribosome"/>
    <property type="evidence" value="ECO:0007669"/>
    <property type="project" value="InterPro"/>
</dbReference>
<dbReference type="GO" id="GO:0006412">
    <property type="term" value="P:translation"/>
    <property type="evidence" value="ECO:0007669"/>
    <property type="project" value="UniProtKB-UniRule"/>
</dbReference>
<dbReference type="CDD" id="cd05797">
    <property type="entry name" value="Ribosomal_L10"/>
    <property type="match status" value="1"/>
</dbReference>
<dbReference type="FunFam" id="3.30.70.1730:FF:000001">
    <property type="entry name" value="50S ribosomal protein L10"/>
    <property type="match status" value="1"/>
</dbReference>
<dbReference type="Gene3D" id="3.30.70.1730">
    <property type="match status" value="1"/>
</dbReference>
<dbReference type="HAMAP" id="MF_00362">
    <property type="entry name" value="Ribosomal_uL10"/>
    <property type="match status" value="1"/>
</dbReference>
<dbReference type="InterPro" id="IPR001790">
    <property type="entry name" value="Ribosomal_uL10"/>
</dbReference>
<dbReference type="InterPro" id="IPR043141">
    <property type="entry name" value="Ribosomal_uL10-like_sf"/>
</dbReference>
<dbReference type="InterPro" id="IPR022973">
    <property type="entry name" value="Ribosomal_uL10_bac"/>
</dbReference>
<dbReference type="InterPro" id="IPR047865">
    <property type="entry name" value="Ribosomal_uL10_bac_type"/>
</dbReference>
<dbReference type="InterPro" id="IPR002363">
    <property type="entry name" value="Ribosomal_uL10_CS_bac"/>
</dbReference>
<dbReference type="NCBIfam" id="NF000955">
    <property type="entry name" value="PRK00099.1-1"/>
    <property type="match status" value="1"/>
</dbReference>
<dbReference type="PANTHER" id="PTHR11560">
    <property type="entry name" value="39S RIBOSOMAL PROTEIN L10, MITOCHONDRIAL"/>
    <property type="match status" value="1"/>
</dbReference>
<dbReference type="Pfam" id="PF00466">
    <property type="entry name" value="Ribosomal_L10"/>
    <property type="match status" value="1"/>
</dbReference>
<dbReference type="SUPFAM" id="SSF160369">
    <property type="entry name" value="Ribosomal protein L10-like"/>
    <property type="match status" value="1"/>
</dbReference>
<dbReference type="PROSITE" id="PS01109">
    <property type="entry name" value="RIBOSOMAL_L10"/>
    <property type="match status" value="1"/>
</dbReference>
<sequence>MSEAIIAKKAEQVELIAEKMKAAASIVVVDSRGLTVEQDTNLRRSLRESDVEFKVIKNSILTRAAEKAGLEDLKELFVGPSAVAFSNEDVIAPAKVISDFAKDAEALEIKGGSVDGKFTSVEEINALAKLPNKEGMLSMLLSVLQAPVRNVAYAVKAVAEKDEEVA</sequence>
<keyword id="KW-1185">Reference proteome</keyword>
<keyword id="KW-0687">Ribonucleoprotein</keyword>
<keyword id="KW-0689">Ribosomal protein</keyword>
<keyword id="KW-0694">RNA-binding</keyword>
<keyword id="KW-0699">rRNA-binding</keyword>
<evidence type="ECO:0000255" key="1">
    <source>
        <dbReference type="HAMAP-Rule" id="MF_00362"/>
    </source>
</evidence>
<evidence type="ECO:0000305" key="2"/>
<comment type="function">
    <text evidence="1">Forms part of the ribosomal stalk, playing a central role in the interaction of the ribosome with GTP-bound translation factors.</text>
</comment>
<comment type="subunit">
    <text evidence="1">Part of the ribosomal stalk of the 50S ribosomal subunit. The N-terminus interacts with L11 and the large rRNA to form the base of the stalk. The C-terminus forms an elongated spine to which L12 dimers bind in a sequential fashion forming a multimeric L10(L12)X complex.</text>
</comment>
<comment type="similarity">
    <text evidence="1">Belongs to the universal ribosomal protein uL10 family.</text>
</comment>
<feature type="chain" id="PRO_0000154716" description="Large ribosomal subunit protein uL10">
    <location>
        <begin position="1"/>
        <end position="166"/>
    </location>
</feature>
<proteinExistence type="inferred from homology"/>